<dbReference type="EMBL" id="CP000901">
    <property type="protein sequence ID" value="ABX86418.1"/>
    <property type="molecule type" value="Genomic_DNA"/>
</dbReference>
<dbReference type="RefSeq" id="WP_002209813.1">
    <property type="nucleotide sequence ID" value="NZ_CP009935.1"/>
</dbReference>
<dbReference type="SMR" id="A9R7Z8"/>
<dbReference type="GeneID" id="57975832"/>
<dbReference type="KEGG" id="ypg:YpAngola_A0414"/>
<dbReference type="PATRIC" id="fig|349746.12.peg.1368"/>
<dbReference type="GO" id="GO:0005525">
    <property type="term" value="F:GTP binding"/>
    <property type="evidence" value="ECO:0007669"/>
    <property type="project" value="UniProtKB-UniRule"/>
</dbReference>
<dbReference type="GO" id="GO:0043022">
    <property type="term" value="F:ribosome binding"/>
    <property type="evidence" value="ECO:0007669"/>
    <property type="project" value="TreeGrafter"/>
</dbReference>
<dbReference type="GO" id="GO:0042254">
    <property type="term" value="P:ribosome biogenesis"/>
    <property type="evidence" value="ECO:0007669"/>
    <property type="project" value="UniProtKB-KW"/>
</dbReference>
<dbReference type="CDD" id="cd01894">
    <property type="entry name" value="EngA1"/>
    <property type="match status" value="1"/>
</dbReference>
<dbReference type="CDD" id="cd01895">
    <property type="entry name" value="EngA2"/>
    <property type="match status" value="1"/>
</dbReference>
<dbReference type="FunFam" id="3.30.300.20:FF:000004">
    <property type="entry name" value="GTPase Der"/>
    <property type="match status" value="1"/>
</dbReference>
<dbReference type="FunFam" id="3.40.50.300:FF:000040">
    <property type="entry name" value="GTPase Der"/>
    <property type="match status" value="1"/>
</dbReference>
<dbReference type="FunFam" id="3.40.50.300:FF:000057">
    <property type="entry name" value="GTPase Der"/>
    <property type="match status" value="1"/>
</dbReference>
<dbReference type="Gene3D" id="3.30.300.20">
    <property type="match status" value="1"/>
</dbReference>
<dbReference type="Gene3D" id="3.40.50.300">
    <property type="entry name" value="P-loop containing nucleotide triphosphate hydrolases"/>
    <property type="match status" value="2"/>
</dbReference>
<dbReference type="HAMAP" id="MF_00195">
    <property type="entry name" value="GTPase_Der"/>
    <property type="match status" value="1"/>
</dbReference>
<dbReference type="InterPro" id="IPR031166">
    <property type="entry name" value="G_ENGA"/>
</dbReference>
<dbReference type="InterPro" id="IPR006073">
    <property type="entry name" value="GTP-bd"/>
</dbReference>
<dbReference type="InterPro" id="IPR016484">
    <property type="entry name" value="GTPase_Der"/>
</dbReference>
<dbReference type="InterPro" id="IPR032859">
    <property type="entry name" value="KH_dom-like"/>
</dbReference>
<dbReference type="InterPro" id="IPR015946">
    <property type="entry name" value="KH_dom-like_a/b"/>
</dbReference>
<dbReference type="InterPro" id="IPR027417">
    <property type="entry name" value="P-loop_NTPase"/>
</dbReference>
<dbReference type="InterPro" id="IPR005225">
    <property type="entry name" value="Small_GTP-bd"/>
</dbReference>
<dbReference type="NCBIfam" id="TIGR03594">
    <property type="entry name" value="GTPase_EngA"/>
    <property type="match status" value="1"/>
</dbReference>
<dbReference type="NCBIfam" id="TIGR00231">
    <property type="entry name" value="small_GTP"/>
    <property type="match status" value="2"/>
</dbReference>
<dbReference type="PANTHER" id="PTHR43834">
    <property type="entry name" value="GTPASE DER"/>
    <property type="match status" value="1"/>
</dbReference>
<dbReference type="PANTHER" id="PTHR43834:SF6">
    <property type="entry name" value="GTPASE DER"/>
    <property type="match status" value="1"/>
</dbReference>
<dbReference type="Pfam" id="PF14714">
    <property type="entry name" value="KH_dom-like"/>
    <property type="match status" value="1"/>
</dbReference>
<dbReference type="Pfam" id="PF01926">
    <property type="entry name" value="MMR_HSR1"/>
    <property type="match status" value="2"/>
</dbReference>
<dbReference type="PIRSF" id="PIRSF006485">
    <property type="entry name" value="GTP-binding_EngA"/>
    <property type="match status" value="1"/>
</dbReference>
<dbReference type="PRINTS" id="PR00326">
    <property type="entry name" value="GTP1OBG"/>
</dbReference>
<dbReference type="SUPFAM" id="SSF52540">
    <property type="entry name" value="P-loop containing nucleoside triphosphate hydrolases"/>
    <property type="match status" value="2"/>
</dbReference>
<dbReference type="PROSITE" id="PS51712">
    <property type="entry name" value="G_ENGA"/>
    <property type="match status" value="2"/>
</dbReference>
<comment type="function">
    <text evidence="1">GTPase that plays an essential role in the late steps of ribosome biogenesis.</text>
</comment>
<comment type="subunit">
    <text evidence="1">Associates with the 50S ribosomal subunit.</text>
</comment>
<comment type="similarity">
    <text evidence="1">Belongs to the TRAFAC class TrmE-Era-EngA-EngB-Septin-like GTPase superfamily. EngA (Der) GTPase family.</text>
</comment>
<gene>
    <name evidence="1" type="primary">der</name>
    <name type="synonym">engA</name>
    <name type="ordered locus">YpAngola_A0414</name>
</gene>
<name>DER_YERPG</name>
<sequence>MIPVIALVGRPNVGKSTLFNRLTHTRDALVADFPGLTRDRKYGRAEVEGHEFIVVDTGGIDGTEDGVETKMAGQSLLAIEEADIVLFMVDARAGLMPADQGIAQHLRSREKATFLVANKTDGIDPDTATADFYSLGLGEVHAIAASHGRGVTQLIEDVMAPYMDAEEPEVELTEEEENAAYWAEQEAQGEDVPPEDPEDDFDPRTLPIKLAIVGRPNVGKSTLTNRILGEDRVVVYDMPGTTRDSIYIPMTRDDREYILIDTAGVRKRGKITETVEKFSVIKTLQAIEDSNVVLLVIDARDGISDQDLSLLGFILNSGRSLVIAVNKWDGMTEEARAQVKDMLDLRLGFVDFARIHFISALHGSGVGNLFESVQEAYDCSTKRVGTSLLTRIMQMAEEDHQPPLVRGRRVKLKYAHAGGYNPPIVVIHGNQVTDLSDSYKRYLMNYFRRSLKVMGTPIRIQFKEGENPFAGKRNPLTPNQMRKRKRLMSHLKKGK</sequence>
<reference key="1">
    <citation type="journal article" date="2010" name="J. Bacteriol.">
        <title>Genome sequence of the deep-rooted Yersinia pestis strain Angola reveals new insights into the evolution and pangenome of the plague bacterium.</title>
        <authorList>
            <person name="Eppinger M."/>
            <person name="Worsham P.L."/>
            <person name="Nikolich M.P."/>
            <person name="Riley D.R."/>
            <person name="Sebastian Y."/>
            <person name="Mou S."/>
            <person name="Achtman M."/>
            <person name="Lindler L.E."/>
            <person name="Ravel J."/>
        </authorList>
    </citation>
    <scope>NUCLEOTIDE SEQUENCE [LARGE SCALE GENOMIC DNA]</scope>
    <source>
        <strain>Angola</strain>
    </source>
</reference>
<organism>
    <name type="scientific">Yersinia pestis bv. Antiqua (strain Angola)</name>
    <dbReference type="NCBI Taxonomy" id="349746"/>
    <lineage>
        <taxon>Bacteria</taxon>
        <taxon>Pseudomonadati</taxon>
        <taxon>Pseudomonadota</taxon>
        <taxon>Gammaproteobacteria</taxon>
        <taxon>Enterobacterales</taxon>
        <taxon>Yersiniaceae</taxon>
        <taxon>Yersinia</taxon>
    </lineage>
</organism>
<proteinExistence type="inferred from homology"/>
<accession>A9R7Z8</accession>
<protein>
    <recommendedName>
        <fullName evidence="1">GTPase Der</fullName>
    </recommendedName>
    <alternativeName>
        <fullName evidence="1">GTP-binding protein EngA</fullName>
    </alternativeName>
</protein>
<keyword id="KW-0342">GTP-binding</keyword>
<keyword id="KW-0547">Nucleotide-binding</keyword>
<keyword id="KW-0677">Repeat</keyword>
<keyword id="KW-0690">Ribosome biogenesis</keyword>
<evidence type="ECO:0000255" key="1">
    <source>
        <dbReference type="HAMAP-Rule" id="MF_00195"/>
    </source>
</evidence>
<feature type="chain" id="PRO_1000099184" description="GTPase Der">
    <location>
        <begin position="1"/>
        <end position="495"/>
    </location>
</feature>
<feature type="domain" description="EngA-type G 1">
    <location>
        <begin position="3"/>
        <end position="166"/>
    </location>
</feature>
<feature type="domain" description="EngA-type G 2">
    <location>
        <begin position="208"/>
        <end position="381"/>
    </location>
</feature>
<feature type="domain" description="KH-like" evidence="1">
    <location>
        <begin position="382"/>
        <end position="466"/>
    </location>
</feature>
<feature type="binding site" evidence="1">
    <location>
        <begin position="9"/>
        <end position="16"/>
    </location>
    <ligand>
        <name>GTP</name>
        <dbReference type="ChEBI" id="CHEBI:37565"/>
        <label>1</label>
    </ligand>
</feature>
<feature type="binding site" evidence="1">
    <location>
        <begin position="56"/>
        <end position="60"/>
    </location>
    <ligand>
        <name>GTP</name>
        <dbReference type="ChEBI" id="CHEBI:37565"/>
        <label>1</label>
    </ligand>
</feature>
<feature type="binding site" evidence="1">
    <location>
        <begin position="118"/>
        <end position="121"/>
    </location>
    <ligand>
        <name>GTP</name>
        <dbReference type="ChEBI" id="CHEBI:37565"/>
        <label>1</label>
    </ligand>
</feature>
<feature type="binding site" evidence="1">
    <location>
        <begin position="214"/>
        <end position="221"/>
    </location>
    <ligand>
        <name>GTP</name>
        <dbReference type="ChEBI" id="CHEBI:37565"/>
        <label>2</label>
    </ligand>
</feature>
<feature type="binding site" evidence="1">
    <location>
        <begin position="261"/>
        <end position="265"/>
    </location>
    <ligand>
        <name>GTP</name>
        <dbReference type="ChEBI" id="CHEBI:37565"/>
        <label>2</label>
    </ligand>
</feature>
<feature type="binding site" evidence="1">
    <location>
        <begin position="326"/>
        <end position="329"/>
    </location>
    <ligand>
        <name>GTP</name>
        <dbReference type="ChEBI" id="CHEBI:37565"/>
        <label>2</label>
    </ligand>
</feature>